<keyword id="KW-0067">ATP-binding</keyword>
<keyword id="KW-0963">Cytoplasm</keyword>
<keyword id="KW-0436">Ligase</keyword>
<keyword id="KW-0460">Magnesium</keyword>
<keyword id="KW-0479">Metal-binding</keyword>
<keyword id="KW-0547">Nucleotide-binding</keyword>
<keyword id="KW-1185">Reference proteome</keyword>
<sequence>MDRQKEFVLRTLEERDIRFVRLWFTDVLGFLKSVAIAPAELEGAFEEGIGFDGSSIEGFARVSESDTVAHPDPSTFQVLPWATSSGHHHSARMFCDITMPDGSPSWADPRHVLRRQLTKAGELGFSCYVHPEIEFFLLKPGPEDGSVPVPVDNAGYFDQAVHDSALNFRRHAIDALEFMGISVEFSHHEGAPGQQEIDLRFADALSMADNVMTFRYVIKEVALEEGARASFMPKPFGQHPGSAMHTHMSLFEGDVNAFHSADDPLQLSEVGKSFIAGILEHACEISAVTNQWVNSYKRLVQGGEAPTAASWGAANRSALVRVPMYTPHKTSSRRVEVRSPDSACNPYLTFAVLLAAGLRGVEKGYVLGPQAEDNVWDLTPEERRAMGYRELPSSLDSALRAMEASELVAEALGEHVFDFFLRNKRTEWANYRSHVTPYELRTYLSL</sequence>
<feature type="chain" id="PRO_0000153245" description="Glutamine synthetase">
    <location>
        <begin position="1"/>
        <end position="446"/>
    </location>
</feature>
<feature type="domain" description="GS beta-grasp" evidence="5">
    <location>
        <begin position="15"/>
        <end position="102"/>
    </location>
</feature>
<feature type="domain" description="GS catalytic" evidence="6">
    <location>
        <begin position="109"/>
        <end position="446"/>
    </location>
</feature>
<feature type="binding site" evidence="2">
    <location>
        <position position="132"/>
    </location>
    <ligand>
        <name>Mg(2+)</name>
        <dbReference type="ChEBI" id="CHEBI:18420"/>
        <label>1</label>
    </ligand>
</feature>
<feature type="binding site" evidence="2">
    <location>
        <position position="134"/>
    </location>
    <ligand>
        <name>Mg(2+)</name>
        <dbReference type="ChEBI" id="CHEBI:18420"/>
        <label>2</label>
    </ligand>
</feature>
<feature type="binding site" evidence="4">
    <location>
        <position position="184"/>
    </location>
    <ligand>
        <name>ATP</name>
        <dbReference type="ChEBI" id="CHEBI:30616"/>
    </ligand>
</feature>
<feature type="binding site" evidence="2">
    <location>
        <position position="189"/>
    </location>
    <ligand>
        <name>Mg(2+)</name>
        <dbReference type="ChEBI" id="CHEBI:18420"/>
        <label>2</label>
    </ligand>
</feature>
<feature type="binding site" evidence="2">
    <location>
        <position position="196"/>
    </location>
    <ligand>
        <name>Mg(2+)</name>
        <dbReference type="ChEBI" id="CHEBI:18420"/>
        <label>2</label>
    </ligand>
</feature>
<feature type="binding site" evidence="2">
    <location>
        <position position="241"/>
    </location>
    <ligand>
        <name>L-glutamate</name>
        <dbReference type="ChEBI" id="CHEBI:29985"/>
    </ligand>
</feature>
<feature type="binding site" evidence="2">
    <location>
        <position position="245"/>
    </location>
    <ligand>
        <name>Mg(2+)</name>
        <dbReference type="ChEBI" id="CHEBI:18420"/>
        <label>1</label>
    </ligand>
</feature>
<feature type="binding site" evidence="4">
    <location>
        <begin position="247"/>
        <end position="249"/>
    </location>
    <ligand>
        <name>ATP</name>
        <dbReference type="ChEBI" id="CHEBI:30616"/>
    </ligand>
</feature>
<feature type="binding site" evidence="3">
    <location>
        <position position="249"/>
    </location>
    <ligand>
        <name>ATP</name>
        <dbReference type="ChEBI" id="CHEBI:30616"/>
    </ligand>
</feature>
<feature type="binding site" evidence="1">
    <location>
        <position position="298"/>
    </location>
    <ligand>
        <name>L-glutamate</name>
        <dbReference type="ChEBI" id="CHEBI:29985"/>
    </ligand>
</feature>
<feature type="binding site" evidence="1">
    <location>
        <position position="304"/>
    </location>
    <ligand>
        <name>L-glutamate</name>
        <dbReference type="ChEBI" id="CHEBI:29985"/>
    </ligand>
</feature>
<feature type="binding site" evidence="4">
    <location>
        <position position="316"/>
    </location>
    <ligand>
        <name>ATP</name>
        <dbReference type="ChEBI" id="CHEBI:30616"/>
    </ligand>
</feature>
<feature type="binding site" evidence="4">
    <location>
        <position position="316"/>
    </location>
    <ligand>
        <name>L-glutamate</name>
        <dbReference type="ChEBI" id="CHEBI:29985"/>
    </ligand>
</feature>
<feature type="binding site" evidence="4">
    <location>
        <position position="321"/>
    </location>
    <ligand>
        <name>ATP</name>
        <dbReference type="ChEBI" id="CHEBI:30616"/>
    </ligand>
</feature>
<feature type="binding site" evidence="2">
    <location>
        <position position="336"/>
    </location>
    <ligand>
        <name>Mg(2+)</name>
        <dbReference type="ChEBI" id="CHEBI:18420"/>
        <label>1</label>
    </ligand>
</feature>
<feature type="binding site" evidence="1">
    <location>
        <position position="338"/>
    </location>
    <ligand>
        <name>L-glutamate</name>
        <dbReference type="ChEBI" id="CHEBI:29985"/>
    </ligand>
</feature>
<feature type="site" description="Important for inhibition by glutamine" evidence="2">
    <location>
        <position position="61"/>
    </location>
</feature>
<reference key="1">
    <citation type="journal article" date="2003" name="Proc. Natl. Acad. Sci. U.S.A.">
        <title>The complete genome sequence of Mycobacterium bovis.</title>
        <authorList>
            <person name="Garnier T."/>
            <person name="Eiglmeier K."/>
            <person name="Camus J.-C."/>
            <person name="Medina N."/>
            <person name="Mansoor H."/>
            <person name="Pryor M."/>
            <person name="Duthoy S."/>
            <person name="Grondin S."/>
            <person name="Lacroix C."/>
            <person name="Monsempe C."/>
            <person name="Simon S."/>
            <person name="Harris B."/>
            <person name="Atkin R."/>
            <person name="Doggett J."/>
            <person name="Mayes R."/>
            <person name="Keating L."/>
            <person name="Wheeler P.R."/>
            <person name="Parkhill J."/>
            <person name="Barrell B.G."/>
            <person name="Cole S.T."/>
            <person name="Gordon S.V."/>
            <person name="Hewinson R.G."/>
        </authorList>
    </citation>
    <scope>NUCLEOTIDE SEQUENCE [LARGE SCALE GENOMIC DNA]</scope>
    <source>
        <strain>ATCC BAA-935 / AF2122/97</strain>
    </source>
</reference>
<reference key="2">
    <citation type="journal article" date="2017" name="Genome Announc.">
        <title>Updated reference genome sequence and annotation of Mycobacterium bovis AF2122/97.</title>
        <authorList>
            <person name="Malone K.M."/>
            <person name="Farrell D."/>
            <person name="Stuber T.P."/>
            <person name="Schubert O.T."/>
            <person name="Aebersold R."/>
            <person name="Robbe-Austerman S."/>
            <person name="Gordon S.V."/>
        </authorList>
    </citation>
    <scope>NUCLEOTIDE SEQUENCE [LARGE SCALE GENOMIC DNA]</scope>
    <scope>GENOME REANNOTATION</scope>
    <source>
        <strain>ATCC BAA-935 / AF2122/97</strain>
    </source>
</reference>
<name>GLN1A_MYCBO</name>
<comment type="function">
    <text evidence="2">Glutamine synthetase (GS) is an unusual multitasking protein that functions as an enzyme, a transcription coregulator, and a chaperone in ammonium assimilation and in the regulation of genes involved in nitrogen metabolism. It catalyzes the ATP-dependent biosynthesis of glutamine from glutamate and ammonia. Feedback-inhibited GlnA also interacts with and regulates the activity of the transcriptional regulator TnrA. During nitrogen limitation, TnrA is in its DNA-binding active state and turns on the transcription of genes required for nitrogen assimilation. Under conditions of nitrogen excess, feedback-inhibited GlnA forms a stable complex with TnrA, which inhibits its DNA-binding activity. In contrast, feedback-inhibited GlnA acts as a chaperone to stabilize the DNA-binding activity of GlnR, which represses the transcription of nitrogen assimilation genes.</text>
</comment>
<comment type="catalytic activity">
    <reaction evidence="2">
        <text>L-glutamate + NH4(+) + ATP = L-glutamine + ADP + phosphate + H(+)</text>
        <dbReference type="Rhea" id="RHEA:16169"/>
        <dbReference type="ChEBI" id="CHEBI:15378"/>
        <dbReference type="ChEBI" id="CHEBI:28938"/>
        <dbReference type="ChEBI" id="CHEBI:29985"/>
        <dbReference type="ChEBI" id="CHEBI:30616"/>
        <dbReference type="ChEBI" id="CHEBI:43474"/>
        <dbReference type="ChEBI" id="CHEBI:58359"/>
        <dbReference type="ChEBI" id="CHEBI:456216"/>
        <dbReference type="EC" id="6.3.1.2"/>
    </reaction>
</comment>
<comment type="cofactor">
    <cofactor evidence="2">
        <name>Mg(2+)</name>
        <dbReference type="ChEBI" id="CHEBI:18420"/>
    </cofactor>
    <text evidence="2">Binds 2 Mg(2+) ions per subunit.</text>
</comment>
<comment type="activity regulation">
    <text evidence="2">Inhibited by glutamine.</text>
</comment>
<comment type="subunit">
    <text evidence="2">Oligomer of 12 subunits arranged in the form of two hexagons. In its feedback-inhibited form, interacts with TnrA in order to block its DNA-binding activity.</text>
</comment>
<comment type="subcellular location">
    <subcellularLocation>
        <location evidence="2">Cytoplasm</location>
    </subcellularLocation>
</comment>
<comment type="similarity">
    <text evidence="7">Belongs to the glutamine synthetase family.</text>
</comment>
<proteinExistence type="inferred from homology"/>
<organism>
    <name type="scientific">Mycobacterium bovis (strain ATCC BAA-935 / AF2122/97)</name>
    <dbReference type="NCBI Taxonomy" id="233413"/>
    <lineage>
        <taxon>Bacteria</taxon>
        <taxon>Bacillati</taxon>
        <taxon>Actinomycetota</taxon>
        <taxon>Actinomycetes</taxon>
        <taxon>Mycobacteriales</taxon>
        <taxon>Mycobacteriaceae</taxon>
        <taxon>Mycobacterium</taxon>
        <taxon>Mycobacterium tuberculosis complex</taxon>
    </lineage>
</organism>
<dbReference type="EC" id="6.3.1.2" evidence="2"/>
<dbReference type="EMBL" id="LT708304">
    <property type="protein sequence ID" value="SIU00854.1"/>
    <property type="molecule type" value="Genomic_DNA"/>
</dbReference>
<dbReference type="RefSeq" id="NP_855895.1">
    <property type="nucleotide sequence ID" value="NC_002945.3"/>
</dbReference>
<dbReference type="RefSeq" id="WP_003411482.1">
    <property type="nucleotide sequence ID" value="NC_002945.4"/>
</dbReference>
<dbReference type="SMR" id="P64246"/>
<dbReference type="KEGG" id="mbo:BQ2027_MB2246C"/>
<dbReference type="PATRIC" id="fig|233413.5.peg.2463"/>
<dbReference type="BRENDA" id="6.3.1.2">
    <property type="organism ID" value="3494"/>
</dbReference>
<dbReference type="Proteomes" id="UP000001419">
    <property type="component" value="Chromosome"/>
</dbReference>
<dbReference type="GO" id="GO:0005737">
    <property type="term" value="C:cytoplasm"/>
    <property type="evidence" value="ECO:0007669"/>
    <property type="project" value="UniProtKB-SubCell"/>
</dbReference>
<dbReference type="GO" id="GO:0005524">
    <property type="term" value="F:ATP binding"/>
    <property type="evidence" value="ECO:0007669"/>
    <property type="project" value="UniProtKB-KW"/>
</dbReference>
<dbReference type="GO" id="GO:0004356">
    <property type="term" value="F:glutamine synthetase activity"/>
    <property type="evidence" value="ECO:0007669"/>
    <property type="project" value="UniProtKB-EC"/>
</dbReference>
<dbReference type="GO" id="GO:0046872">
    <property type="term" value="F:metal ion binding"/>
    <property type="evidence" value="ECO:0007669"/>
    <property type="project" value="UniProtKB-KW"/>
</dbReference>
<dbReference type="GO" id="GO:0006542">
    <property type="term" value="P:glutamine biosynthetic process"/>
    <property type="evidence" value="ECO:0007669"/>
    <property type="project" value="InterPro"/>
</dbReference>
<dbReference type="FunFam" id="3.30.590.10:FF:000003">
    <property type="entry name" value="Glutamine synthetase 2"/>
    <property type="match status" value="1"/>
</dbReference>
<dbReference type="FunFam" id="3.10.20.70:FF:000002">
    <property type="entry name" value="Glutamine synthetase I"/>
    <property type="match status" value="1"/>
</dbReference>
<dbReference type="Gene3D" id="3.10.20.70">
    <property type="entry name" value="Glutamine synthetase, N-terminal domain"/>
    <property type="match status" value="1"/>
</dbReference>
<dbReference type="Gene3D" id="3.30.590.10">
    <property type="entry name" value="Glutamine synthetase/guanido kinase, catalytic domain"/>
    <property type="match status" value="1"/>
</dbReference>
<dbReference type="InterPro" id="IPR008147">
    <property type="entry name" value="Gln_synt_N"/>
</dbReference>
<dbReference type="InterPro" id="IPR036651">
    <property type="entry name" value="Gln_synt_N_sf"/>
</dbReference>
<dbReference type="InterPro" id="IPR014746">
    <property type="entry name" value="Gln_synth/guanido_kin_cat_dom"/>
</dbReference>
<dbReference type="InterPro" id="IPR008146">
    <property type="entry name" value="Gln_synth_cat_dom"/>
</dbReference>
<dbReference type="InterPro" id="IPR027303">
    <property type="entry name" value="Gln_synth_gly_rich_site"/>
</dbReference>
<dbReference type="PANTHER" id="PTHR43785:SF11">
    <property type="entry name" value="GAMMA-GLUTAMYLPOLYAMINE SYNTHETASE GLNA2"/>
    <property type="match status" value="1"/>
</dbReference>
<dbReference type="PANTHER" id="PTHR43785">
    <property type="entry name" value="GAMMA-GLUTAMYLPUTRESCINE SYNTHETASE"/>
    <property type="match status" value="1"/>
</dbReference>
<dbReference type="Pfam" id="PF00120">
    <property type="entry name" value="Gln-synt_C"/>
    <property type="match status" value="1"/>
</dbReference>
<dbReference type="Pfam" id="PF03951">
    <property type="entry name" value="Gln-synt_N"/>
    <property type="match status" value="1"/>
</dbReference>
<dbReference type="SMART" id="SM01230">
    <property type="entry name" value="Gln-synt_C"/>
    <property type="match status" value="1"/>
</dbReference>
<dbReference type="SUPFAM" id="SSF54368">
    <property type="entry name" value="Glutamine synthetase, N-terminal domain"/>
    <property type="match status" value="1"/>
</dbReference>
<dbReference type="SUPFAM" id="SSF55931">
    <property type="entry name" value="Glutamine synthetase/guanido kinase"/>
    <property type="match status" value="1"/>
</dbReference>
<dbReference type="PROSITE" id="PS00181">
    <property type="entry name" value="GLNA_ATP"/>
    <property type="match status" value="1"/>
</dbReference>
<dbReference type="PROSITE" id="PS51986">
    <property type="entry name" value="GS_BETA_GRASP"/>
    <property type="match status" value="1"/>
</dbReference>
<dbReference type="PROSITE" id="PS51987">
    <property type="entry name" value="GS_CATALYTIC"/>
    <property type="match status" value="1"/>
</dbReference>
<gene>
    <name evidence="2" type="primary">glnA2</name>
    <name type="ordered locus">BQ2027_MB2246C</name>
</gene>
<evidence type="ECO:0000250" key="1">
    <source>
        <dbReference type="UniProtKB" id="P0A1P6"/>
    </source>
</evidence>
<evidence type="ECO:0000250" key="2">
    <source>
        <dbReference type="UniProtKB" id="P12425"/>
    </source>
</evidence>
<evidence type="ECO:0000250" key="3">
    <source>
        <dbReference type="UniProtKB" id="P77961"/>
    </source>
</evidence>
<evidence type="ECO:0000250" key="4">
    <source>
        <dbReference type="UniProtKB" id="P9WN39"/>
    </source>
</evidence>
<evidence type="ECO:0000255" key="5">
    <source>
        <dbReference type="PROSITE-ProRule" id="PRU01330"/>
    </source>
</evidence>
<evidence type="ECO:0000255" key="6">
    <source>
        <dbReference type="PROSITE-ProRule" id="PRU01331"/>
    </source>
</evidence>
<evidence type="ECO:0000305" key="7"/>
<accession>P64246</accession>
<accession>A0A1R3Y2P8</accession>
<accession>Q10378</accession>
<accession>X2BK57</accession>
<protein>
    <recommendedName>
        <fullName evidence="2">Glutamine synthetase</fullName>
        <shortName evidence="2">GS</shortName>
        <ecNumber evidence="2">6.3.1.2</ecNumber>
    </recommendedName>
    <alternativeName>
        <fullName evidence="2">Glutamate--ammonia ligase</fullName>
    </alternativeName>
    <alternativeName>
        <fullName evidence="2">Glutamine synthetase I alpha</fullName>
        <shortName evidence="2">GSI alpha</shortName>
    </alternativeName>
</protein>